<reference key="1">
    <citation type="journal article" date="2009" name="PLoS Genet.">
        <title>Organised genome dynamics in the Escherichia coli species results in highly diverse adaptive paths.</title>
        <authorList>
            <person name="Touchon M."/>
            <person name="Hoede C."/>
            <person name="Tenaillon O."/>
            <person name="Barbe V."/>
            <person name="Baeriswyl S."/>
            <person name="Bidet P."/>
            <person name="Bingen E."/>
            <person name="Bonacorsi S."/>
            <person name="Bouchier C."/>
            <person name="Bouvet O."/>
            <person name="Calteau A."/>
            <person name="Chiapello H."/>
            <person name="Clermont O."/>
            <person name="Cruveiller S."/>
            <person name="Danchin A."/>
            <person name="Diard M."/>
            <person name="Dossat C."/>
            <person name="Karoui M.E."/>
            <person name="Frapy E."/>
            <person name="Garry L."/>
            <person name="Ghigo J.M."/>
            <person name="Gilles A.M."/>
            <person name="Johnson J."/>
            <person name="Le Bouguenec C."/>
            <person name="Lescat M."/>
            <person name="Mangenot S."/>
            <person name="Martinez-Jehanne V."/>
            <person name="Matic I."/>
            <person name="Nassif X."/>
            <person name="Oztas S."/>
            <person name="Petit M.A."/>
            <person name="Pichon C."/>
            <person name="Rouy Z."/>
            <person name="Ruf C.S."/>
            <person name="Schneider D."/>
            <person name="Tourret J."/>
            <person name="Vacherie B."/>
            <person name="Vallenet D."/>
            <person name="Medigue C."/>
            <person name="Rocha E.P.C."/>
            <person name="Denamur E."/>
        </authorList>
    </citation>
    <scope>NUCLEOTIDE SEQUENCE [LARGE SCALE GENOMIC DNA]</scope>
    <source>
        <strain>55989 / EAEC</strain>
    </source>
</reference>
<keyword id="KW-0520">NAD</keyword>
<keyword id="KW-0560">Oxidoreductase</keyword>
<keyword id="KW-1185">Reference proteome</keyword>
<sequence>MQHKLLINGELVSGEGEKQPVYNPATGDVLLEIAEASAEQVDAAVRAADAAFAEWGQTTPKVRTECLLKLADVIEENGQVFAELESRNCGKPLHSAFNDEIPAIVDVFRFFAGAARCLNGLAAGEYLEGHTSMIRRDPLGVVASIAPWNYPLMMAAWKLAPALAAGNCVVLKPSEITPLTALKLAELAKDIFPAGVINVLFGRGKTVGDPLTGHPKVRMVSLTGSIATGEHIISHTASSIKRTHMELGGKAPVIVFDDADIEAVVEGVRTFGYYNAGQDCTAACRIYAQKGIYDTLVEKLGAAVATLKSGAPDDESTELGPLSSLAHLERVSKAVEEAKATGHIKVITGGEKRKGNGYYYAPTLLAGALQDDAIVQKEVFGPVVSVTPFDNEEQVVNWANDSQYGLASSVWTKDVGRAHRVSARLQYGCTWVNTHFMLVSEMPHGGQKLSGYGKDMSLYGLEDYTVVRHVMVKH</sequence>
<name>ABDH_ECO55</name>
<dbReference type="EC" id="1.2.1.19" evidence="1"/>
<dbReference type="EC" id="1.2.1.-" evidence="1"/>
<dbReference type="EMBL" id="CU928145">
    <property type="protein sequence ID" value="CAU97432.1"/>
    <property type="molecule type" value="Genomic_DNA"/>
</dbReference>
<dbReference type="RefSeq" id="WP_001163903.1">
    <property type="nucleotide sequence ID" value="NC_011748.1"/>
</dbReference>
<dbReference type="SMR" id="B7L6F9"/>
<dbReference type="KEGG" id="eck:EC55989_1576"/>
<dbReference type="HOGENOM" id="CLU_005391_1_0_6"/>
<dbReference type="UniPathway" id="UPA00188">
    <property type="reaction ID" value="UER00292"/>
</dbReference>
<dbReference type="Proteomes" id="UP000000746">
    <property type="component" value="Chromosome"/>
</dbReference>
<dbReference type="GO" id="GO:0019145">
    <property type="term" value="F:aminobutyraldehyde dehydrogenase (NAD+) activity"/>
    <property type="evidence" value="ECO:0007669"/>
    <property type="project" value="UniProtKB-UniRule"/>
</dbReference>
<dbReference type="GO" id="GO:0051287">
    <property type="term" value="F:NAD binding"/>
    <property type="evidence" value="ECO:0007669"/>
    <property type="project" value="UniProtKB-UniRule"/>
</dbReference>
<dbReference type="GO" id="GO:0019477">
    <property type="term" value="P:L-lysine catabolic process"/>
    <property type="evidence" value="ECO:0007669"/>
    <property type="project" value="UniProtKB-UniRule"/>
</dbReference>
<dbReference type="GO" id="GO:0009447">
    <property type="term" value="P:putrescine catabolic process"/>
    <property type="evidence" value="ECO:0007669"/>
    <property type="project" value="UniProtKB-UniRule"/>
</dbReference>
<dbReference type="CDD" id="cd07092">
    <property type="entry name" value="ALDH_ABALDH-YdcW"/>
    <property type="match status" value="1"/>
</dbReference>
<dbReference type="FunFam" id="3.40.605.10:FF:000001">
    <property type="entry name" value="Aldehyde dehydrogenase 1"/>
    <property type="match status" value="1"/>
</dbReference>
<dbReference type="FunFam" id="3.40.309.10:FF:000010">
    <property type="entry name" value="Gamma-aminobutyraldehyde dehydrogenase"/>
    <property type="match status" value="1"/>
</dbReference>
<dbReference type="Gene3D" id="3.40.605.10">
    <property type="entry name" value="Aldehyde Dehydrogenase, Chain A, domain 1"/>
    <property type="match status" value="1"/>
</dbReference>
<dbReference type="Gene3D" id="3.40.309.10">
    <property type="entry name" value="Aldehyde Dehydrogenase, Chain A, domain 2"/>
    <property type="match status" value="1"/>
</dbReference>
<dbReference type="HAMAP" id="MF_01275">
    <property type="entry name" value="Aldedh_Prr"/>
    <property type="match status" value="1"/>
</dbReference>
<dbReference type="InterPro" id="IPR016161">
    <property type="entry name" value="Ald_DH/histidinol_DH"/>
</dbReference>
<dbReference type="InterPro" id="IPR016163">
    <property type="entry name" value="Ald_DH_C"/>
</dbReference>
<dbReference type="InterPro" id="IPR029510">
    <property type="entry name" value="Ald_DH_CS_GLU"/>
</dbReference>
<dbReference type="InterPro" id="IPR016162">
    <property type="entry name" value="Ald_DH_N"/>
</dbReference>
<dbReference type="InterPro" id="IPR015590">
    <property type="entry name" value="Aldehyde_DH_dom"/>
</dbReference>
<dbReference type="InterPro" id="IPR015657">
    <property type="entry name" value="Aminobutyraldehyde_DH"/>
</dbReference>
<dbReference type="InterPro" id="IPR017749">
    <property type="entry name" value="PatD"/>
</dbReference>
<dbReference type="NCBIfam" id="TIGR03374">
    <property type="entry name" value="ABALDH"/>
    <property type="match status" value="1"/>
</dbReference>
<dbReference type="NCBIfam" id="NF010000">
    <property type="entry name" value="PRK13473.1"/>
    <property type="match status" value="1"/>
</dbReference>
<dbReference type="PANTHER" id="PTHR11699">
    <property type="entry name" value="ALDEHYDE DEHYDROGENASE-RELATED"/>
    <property type="match status" value="1"/>
</dbReference>
<dbReference type="Pfam" id="PF00171">
    <property type="entry name" value="Aldedh"/>
    <property type="match status" value="1"/>
</dbReference>
<dbReference type="SUPFAM" id="SSF53720">
    <property type="entry name" value="ALDH-like"/>
    <property type="match status" value="1"/>
</dbReference>
<dbReference type="PROSITE" id="PS00687">
    <property type="entry name" value="ALDEHYDE_DEHYDR_GLU"/>
    <property type="match status" value="1"/>
</dbReference>
<evidence type="ECO:0000255" key="1">
    <source>
        <dbReference type="HAMAP-Rule" id="MF_01275"/>
    </source>
</evidence>
<protein>
    <recommendedName>
        <fullName evidence="1">Gamma-aminobutyraldehyde dehydrogenase</fullName>
        <shortName evidence="1">ABALDH</shortName>
        <ecNumber evidence="1">1.2.1.19</ecNumber>
    </recommendedName>
    <alternativeName>
        <fullName evidence="1">1-pyrroline dehydrogenase</fullName>
    </alternativeName>
    <alternativeName>
        <fullName evidence="1">4-aminobutanal dehydrogenase</fullName>
    </alternativeName>
    <alternativeName>
        <fullName evidence="1">5-aminopentanal dehydrogenase</fullName>
        <ecNumber evidence="1">1.2.1.-</ecNumber>
    </alternativeName>
</protein>
<feature type="chain" id="PRO_1000165210" description="Gamma-aminobutyraldehyde dehydrogenase">
    <location>
        <begin position="1"/>
        <end position="474"/>
    </location>
</feature>
<feature type="active site" evidence="1">
    <location>
        <position position="246"/>
    </location>
</feature>
<feature type="active site" description="Nucleophile" evidence="1">
    <location>
        <position position="280"/>
    </location>
</feature>
<feature type="binding site" evidence="1">
    <location>
        <begin position="146"/>
        <end position="148"/>
    </location>
    <ligand>
        <name>NAD(+)</name>
        <dbReference type="ChEBI" id="CHEBI:57540"/>
    </ligand>
</feature>
<feature type="binding site" evidence="1">
    <location>
        <begin position="172"/>
        <end position="175"/>
    </location>
    <ligand>
        <name>NAD(+)</name>
        <dbReference type="ChEBI" id="CHEBI:57540"/>
    </ligand>
</feature>
<feature type="binding site" evidence="1">
    <location>
        <position position="209"/>
    </location>
    <ligand>
        <name>NAD(+)</name>
        <dbReference type="ChEBI" id="CHEBI:57540"/>
    </ligand>
</feature>
<feature type="binding site" evidence="1">
    <location>
        <begin position="225"/>
        <end position="228"/>
    </location>
    <ligand>
        <name>NAD(+)</name>
        <dbReference type="ChEBI" id="CHEBI:57540"/>
    </ligand>
</feature>
<feature type="binding site" evidence="1">
    <location>
        <position position="280"/>
    </location>
    <ligand>
        <name>NAD(+)</name>
        <dbReference type="ChEBI" id="CHEBI:57540"/>
    </ligand>
</feature>
<organism>
    <name type="scientific">Escherichia coli (strain 55989 / EAEC)</name>
    <dbReference type="NCBI Taxonomy" id="585055"/>
    <lineage>
        <taxon>Bacteria</taxon>
        <taxon>Pseudomonadati</taxon>
        <taxon>Pseudomonadota</taxon>
        <taxon>Gammaproteobacteria</taxon>
        <taxon>Enterobacterales</taxon>
        <taxon>Enterobacteriaceae</taxon>
        <taxon>Escherichia</taxon>
    </lineage>
</organism>
<gene>
    <name evidence="1" type="primary">patD</name>
    <name type="ordered locus">EC55989_1576</name>
</gene>
<proteinExistence type="inferred from homology"/>
<comment type="function">
    <text evidence="1">Catalyzes the oxidation 4-aminobutanal (gamma-aminobutyraldehyde) to 4-aminobutanoate (gamma-aminobutyrate or GABA). This is the second step in one of two pathways for putrescine degradation, where putrescine is converted into 4-aminobutanoate via 4-aminobutanal. Also functions as a 5-aminopentanal dehydrogenase in a a L-lysine degradation pathway to succinate that proceeds via cadaverine, glutarate and L-2-hydroxyglutarate.</text>
</comment>
<comment type="catalytic activity">
    <reaction evidence="1">
        <text>4-aminobutanal + NAD(+) + H2O = 4-aminobutanoate + NADH + 2 H(+)</text>
        <dbReference type="Rhea" id="RHEA:19105"/>
        <dbReference type="ChEBI" id="CHEBI:15377"/>
        <dbReference type="ChEBI" id="CHEBI:15378"/>
        <dbReference type="ChEBI" id="CHEBI:57540"/>
        <dbReference type="ChEBI" id="CHEBI:57945"/>
        <dbReference type="ChEBI" id="CHEBI:58264"/>
        <dbReference type="ChEBI" id="CHEBI:59888"/>
        <dbReference type="EC" id="1.2.1.19"/>
    </reaction>
    <physiologicalReaction direction="left-to-right" evidence="1">
        <dbReference type="Rhea" id="RHEA:19106"/>
    </physiologicalReaction>
</comment>
<comment type="catalytic activity">
    <reaction evidence="1">
        <text>5-aminopentanal + NAD(+) + H2O = 5-aminopentanoate + NADH + 2 H(+)</text>
        <dbReference type="Rhea" id="RHEA:61632"/>
        <dbReference type="ChEBI" id="CHEBI:15377"/>
        <dbReference type="ChEBI" id="CHEBI:15378"/>
        <dbReference type="ChEBI" id="CHEBI:57540"/>
        <dbReference type="ChEBI" id="CHEBI:57945"/>
        <dbReference type="ChEBI" id="CHEBI:144896"/>
        <dbReference type="ChEBI" id="CHEBI:356010"/>
    </reaction>
    <physiologicalReaction direction="left-to-right" evidence="1">
        <dbReference type="Rhea" id="RHEA:61633"/>
    </physiologicalReaction>
</comment>
<comment type="pathway">
    <text evidence="1">Amine and polyamine degradation; putrescine degradation; 4-aminobutanoate from 4-aminobutanal: step 1/1.</text>
</comment>
<comment type="pathway">
    <text evidence="1">Amino-acid degradation.</text>
</comment>
<comment type="subunit">
    <text evidence="1">Homotetramer.</text>
</comment>
<comment type="miscellaneous">
    <text evidence="1">4-aminobutanal can spontaneously cyclize to 1-pyrroline, and 5-aminopentanal to 1-piperideine.</text>
</comment>
<comment type="similarity">
    <text evidence="1">Belongs to the aldehyde dehydrogenase family. Gamma-aminobutyraldehyde dehydrogenase subfamily.</text>
</comment>
<accession>B7L6F9</accession>